<reference key="1">
    <citation type="submission" date="2006-12" db="EMBL/GenBank/DDBJ databases">
        <title>Complete sequence of Shewanella sp. W3-18-1.</title>
        <authorList>
            <consortium name="US DOE Joint Genome Institute"/>
            <person name="Copeland A."/>
            <person name="Lucas S."/>
            <person name="Lapidus A."/>
            <person name="Barry K."/>
            <person name="Detter J.C."/>
            <person name="Glavina del Rio T."/>
            <person name="Hammon N."/>
            <person name="Israni S."/>
            <person name="Dalin E."/>
            <person name="Tice H."/>
            <person name="Pitluck S."/>
            <person name="Chain P."/>
            <person name="Malfatti S."/>
            <person name="Shin M."/>
            <person name="Vergez L."/>
            <person name="Schmutz J."/>
            <person name="Larimer F."/>
            <person name="Land M."/>
            <person name="Hauser L."/>
            <person name="Kyrpides N."/>
            <person name="Lykidis A."/>
            <person name="Tiedje J."/>
            <person name="Richardson P."/>
        </authorList>
    </citation>
    <scope>NUCLEOTIDE SEQUENCE [LARGE SCALE GENOMIC DNA]</scope>
    <source>
        <strain>W3-18-1</strain>
    </source>
</reference>
<evidence type="ECO:0000255" key="1">
    <source>
        <dbReference type="HAMAP-Rule" id="MF_00166"/>
    </source>
</evidence>
<dbReference type="EMBL" id="CP000503">
    <property type="protein sequence ID" value="ABM23346.1"/>
    <property type="molecule type" value="Genomic_DNA"/>
</dbReference>
<dbReference type="RefSeq" id="WP_006083371.1">
    <property type="nucleotide sequence ID" value="NC_008750.1"/>
</dbReference>
<dbReference type="SMR" id="A1RFA1"/>
<dbReference type="GeneID" id="94726394"/>
<dbReference type="KEGG" id="shw:Sputw3181_0495"/>
<dbReference type="HOGENOM" id="CLU_158040_3_3_6"/>
<dbReference type="Proteomes" id="UP000002597">
    <property type="component" value="Chromosome"/>
</dbReference>
<dbReference type="GO" id="GO:0003700">
    <property type="term" value="F:DNA-binding transcription factor activity"/>
    <property type="evidence" value="ECO:0007669"/>
    <property type="project" value="UniProtKB-UniRule"/>
</dbReference>
<dbReference type="GO" id="GO:0043565">
    <property type="term" value="F:sequence-specific DNA binding"/>
    <property type="evidence" value="ECO:0007669"/>
    <property type="project" value="InterPro"/>
</dbReference>
<dbReference type="FunFam" id="1.10.10.60:FF:000006">
    <property type="entry name" value="DNA-binding protein Fis"/>
    <property type="match status" value="1"/>
</dbReference>
<dbReference type="Gene3D" id="1.10.10.60">
    <property type="entry name" value="Homeodomain-like"/>
    <property type="match status" value="1"/>
</dbReference>
<dbReference type="HAMAP" id="MF_00166">
    <property type="entry name" value="DNA_binding_Fis"/>
    <property type="match status" value="1"/>
</dbReference>
<dbReference type="InterPro" id="IPR005412">
    <property type="entry name" value="Fis_DNA-bd"/>
</dbReference>
<dbReference type="InterPro" id="IPR009057">
    <property type="entry name" value="Homeodomain-like_sf"/>
</dbReference>
<dbReference type="InterPro" id="IPR002197">
    <property type="entry name" value="HTH_Fis"/>
</dbReference>
<dbReference type="InterPro" id="IPR050207">
    <property type="entry name" value="Trans_regulatory_Fis"/>
</dbReference>
<dbReference type="NCBIfam" id="NF001659">
    <property type="entry name" value="PRK00430.1"/>
    <property type="match status" value="1"/>
</dbReference>
<dbReference type="PANTHER" id="PTHR47918">
    <property type="entry name" value="DNA-BINDING PROTEIN FIS"/>
    <property type="match status" value="1"/>
</dbReference>
<dbReference type="PANTHER" id="PTHR47918:SF1">
    <property type="entry name" value="DNA-BINDING PROTEIN FIS"/>
    <property type="match status" value="1"/>
</dbReference>
<dbReference type="Pfam" id="PF02954">
    <property type="entry name" value="HTH_8"/>
    <property type="match status" value="1"/>
</dbReference>
<dbReference type="PIRSF" id="PIRSF002097">
    <property type="entry name" value="DNA-binding_Fis"/>
    <property type="match status" value="1"/>
</dbReference>
<dbReference type="PRINTS" id="PR01591">
    <property type="entry name" value="DNABINDNGFIS"/>
</dbReference>
<dbReference type="PRINTS" id="PR01590">
    <property type="entry name" value="HTHFIS"/>
</dbReference>
<dbReference type="SUPFAM" id="SSF46689">
    <property type="entry name" value="Homeodomain-like"/>
    <property type="match status" value="1"/>
</dbReference>
<keyword id="KW-0010">Activator</keyword>
<keyword id="KW-0238">DNA-binding</keyword>
<keyword id="KW-0804">Transcription</keyword>
<keyword id="KW-0805">Transcription regulation</keyword>
<organism>
    <name type="scientific">Shewanella sp. (strain W3-18-1)</name>
    <dbReference type="NCBI Taxonomy" id="351745"/>
    <lineage>
        <taxon>Bacteria</taxon>
        <taxon>Pseudomonadati</taxon>
        <taxon>Pseudomonadota</taxon>
        <taxon>Gammaproteobacteria</taxon>
        <taxon>Alteromonadales</taxon>
        <taxon>Shewanellaceae</taxon>
        <taxon>Shewanella</taxon>
    </lineage>
</organism>
<protein>
    <recommendedName>
        <fullName evidence="1">DNA-binding protein Fis</fullName>
    </recommendedName>
</protein>
<sequence length="101" mass="11390">MFDQTTNTEVHQLTVGKIETANGTIKPQLLRDAVKRAVTNFFAQLDGQEAQEVYEMVLSEVEAPLLDIIMQHTRGNQTRAANMLGINRGTLRKKLKKYGMN</sequence>
<gene>
    <name evidence="1" type="primary">fis</name>
    <name type="ordered locus">Sputw3181_0495</name>
</gene>
<comment type="function">
    <text evidence="1">Activates ribosomal RNA transcription. Plays a direct role in upstream activation of rRNA promoters.</text>
</comment>
<comment type="subunit">
    <text evidence="1">Homodimer.</text>
</comment>
<comment type="similarity">
    <text evidence="1">Belongs to the transcriptional regulatory Fis family.</text>
</comment>
<proteinExistence type="inferred from homology"/>
<feature type="chain" id="PRO_1000023344" description="DNA-binding protein Fis">
    <location>
        <begin position="1"/>
        <end position="101"/>
    </location>
</feature>
<feature type="DNA-binding region" description="H-T-H motif" evidence="1">
    <location>
        <begin position="77"/>
        <end position="96"/>
    </location>
</feature>
<accession>A1RFA1</accession>
<name>FIS_SHESW</name>